<sequence>MLYLHDVWVNWFEGEENGYNVCHFYEWRKDDTIELLDQVPLLKVDSTLYHYIENELLELPQKMLEDVHHKAYIRKNHERLQQEYCFVVTDGKGIIAIDTIGYNVPIRKSRLIPRQEQMVYEMVENVQAEKYEFQVEEMEKEHHILSPSPFIMNGLTRKERQLKQLLFMALDQLHTTKNTAEIRYWFTEWDPSAYGMVQHMEFEDIWAKLYEEAKTGWSEKHEQLCERLVKGQPFFEKLWEMENEQKVN</sequence>
<accession>B7HZV3</accession>
<name>Y1335_BACC7</name>
<organism>
    <name type="scientific">Bacillus cereus (strain AH187)</name>
    <dbReference type="NCBI Taxonomy" id="405534"/>
    <lineage>
        <taxon>Bacteria</taxon>
        <taxon>Bacillati</taxon>
        <taxon>Bacillota</taxon>
        <taxon>Bacilli</taxon>
        <taxon>Bacillales</taxon>
        <taxon>Bacillaceae</taxon>
        <taxon>Bacillus</taxon>
        <taxon>Bacillus cereus group</taxon>
    </lineage>
</organism>
<reference key="1">
    <citation type="submission" date="2008-10" db="EMBL/GenBank/DDBJ databases">
        <title>Genome sequence of Bacillus cereus AH187.</title>
        <authorList>
            <person name="Dodson R.J."/>
            <person name="Durkin A.S."/>
            <person name="Rosovitz M.J."/>
            <person name="Rasko D.A."/>
            <person name="Kolsto A.B."/>
            <person name="Okstad O.A."/>
            <person name="Ravel J."/>
            <person name="Sutton G."/>
        </authorList>
    </citation>
    <scope>NUCLEOTIDE SEQUENCE [LARGE SCALE GENOMIC DNA]</scope>
    <source>
        <strain>AH187</strain>
    </source>
</reference>
<protein>
    <recommendedName>
        <fullName evidence="1">UPF0736 protein BCAH187_A1335</fullName>
    </recommendedName>
</protein>
<comment type="similarity">
    <text evidence="1">Belongs to the UPF0736 family.</text>
</comment>
<proteinExistence type="inferred from homology"/>
<feature type="chain" id="PRO_0000369136" description="UPF0736 protein BCAH187_A1335">
    <location>
        <begin position="1"/>
        <end position="248"/>
    </location>
</feature>
<dbReference type="EMBL" id="CP001177">
    <property type="protein sequence ID" value="ACJ79932.1"/>
    <property type="molecule type" value="Genomic_DNA"/>
</dbReference>
<dbReference type="SMR" id="B7HZV3"/>
<dbReference type="KEGG" id="bcr:BCAH187_A1335"/>
<dbReference type="HOGENOM" id="CLU_1101152_0_0_9"/>
<dbReference type="Proteomes" id="UP000002214">
    <property type="component" value="Chromosome"/>
</dbReference>
<dbReference type="HAMAP" id="MF_01860">
    <property type="entry name" value="UPF0736"/>
    <property type="match status" value="1"/>
</dbReference>
<dbReference type="InterPro" id="IPR020909">
    <property type="entry name" value="UPF0736"/>
</dbReference>
<dbReference type="Pfam" id="PF12227">
    <property type="entry name" value="DUF3603"/>
    <property type="match status" value="1"/>
</dbReference>
<gene>
    <name type="ordered locus">BCAH187_A1335</name>
</gene>
<evidence type="ECO:0000255" key="1">
    <source>
        <dbReference type="HAMAP-Rule" id="MF_01860"/>
    </source>
</evidence>